<dbReference type="EC" id="3.1.1.4"/>
<dbReference type="EMBL" id="DQ085837">
    <property type="protein sequence ID" value="AAZ22655.1"/>
    <property type="molecule type" value="mRNA"/>
</dbReference>
<dbReference type="PDB" id="1P7O">
    <property type="method" value="X-ray"/>
    <property type="resolution" value="2.30 A"/>
    <property type="chains" value="A/B/C/D/E/F=52-141"/>
</dbReference>
<dbReference type="PDBsum" id="1P7O"/>
<dbReference type="SMR" id="Q45Z29"/>
<dbReference type="EvolutionaryTrace" id="Q45Z29"/>
<dbReference type="GO" id="GO:0005576">
    <property type="term" value="C:extracellular region"/>
    <property type="evidence" value="ECO:0007669"/>
    <property type="project" value="UniProtKB-SubCell"/>
</dbReference>
<dbReference type="GO" id="GO:0005509">
    <property type="term" value="F:calcium ion binding"/>
    <property type="evidence" value="ECO:0007669"/>
    <property type="project" value="InterPro"/>
</dbReference>
<dbReference type="GO" id="GO:0047498">
    <property type="term" value="F:calcium-dependent phospholipase A2 activity"/>
    <property type="evidence" value="ECO:0007669"/>
    <property type="project" value="TreeGrafter"/>
</dbReference>
<dbReference type="GO" id="GO:0005543">
    <property type="term" value="F:phospholipid binding"/>
    <property type="evidence" value="ECO:0007669"/>
    <property type="project" value="TreeGrafter"/>
</dbReference>
<dbReference type="GO" id="GO:0005102">
    <property type="term" value="F:signaling receptor binding"/>
    <property type="evidence" value="ECO:0007669"/>
    <property type="project" value="TreeGrafter"/>
</dbReference>
<dbReference type="GO" id="GO:0090729">
    <property type="term" value="F:toxin activity"/>
    <property type="evidence" value="ECO:0007669"/>
    <property type="project" value="UniProtKB-KW"/>
</dbReference>
<dbReference type="GO" id="GO:0050482">
    <property type="term" value="P:arachidonate secretion"/>
    <property type="evidence" value="ECO:0007669"/>
    <property type="project" value="InterPro"/>
</dbReference>
<dbReference type="GO" id="GO:0006633">
    <property type="term" value="P:fatty acid biosynthetic process"/>
    <property type="evidence" value="ECO:0007669"/>
    <property type="project" value="TreeGrafter"/>
</dbReference>
<dbReference type="GO" id="GO:0016042">
    <property type="term" value="P:lipid catabolic process"/>
    <property type="evidence" value="ECO:0007669"/>
    <property type="project" value="UniProtKB-KW"/>
</dbReference>
<dbReference type="GO" id="GO:0006644">
    <property type="term" value="P:phospholipid metabolic process"/>
    <property type="evidence" value="ECO:0007669"/>
    <property type="project" value="InterPro"/>
</dbReference>
<dbReference type="GO" id="GO:0048146">
    <property type="term" value="P:positive regulation of fibroblast proliferation"/>
    <property type="evidence" value="ECO:0007669"/>
    <property type="project" value="TreeGrafter"/>
</dbReference>
<dbReference type="CDD" id="cd00125">
    <property type="entry name" value="PLA2c"/>
    <property type="match status" value="1"/>
</dbReference>
<dbReference type="FunFam" id="1.20.90.10:FF:000007">
    <property type="entry name" value="Acidic phospholipase A2"/>
    <property type="match status" value="1"/>
</dbReference>
<dbReference type="Gene3D" id="1.20.90.10">
    <property type="entry name" value="Phospholipase A2 domain"/>
    <property type="match status" value="1"/>
</dbReference>
<dbReference type="InterPro" id="IPR001211">
    <property type="entry name" value="PLipase_A2"/>
</dbReference>
<dbReference type="InterPro" id="IPR033112">
    <property type="entry name" value="PLipase_A2_Asp_AS"/>
</dbReference>
<dbReference type="InterPro" id="IPR016090">
    <property type="entry name" value="PLipase_A2_dom"/>
</dbReference>
<dbReference type="InterPro" id="IPR036444">
    <property type="entry name" value="PLipase_A2_dom_sf"/>
</dbReference>
<dbReference type="InterPro" id="IPR033113">
    <property type="entry name" value="PLipase_A2_His_AS"/>
</dbReference>
<dbReference type="PANTHER" id="PTHR11716:SF94">
    <property type="entry name" value="PHOSPHOLIPASE A2"/>
    <property type="match status" value="1"/>
</dbReference>
<dbReference type="PANTHER" id="PTHR11716">
    <property type="entry name" value="PHOSPHOLIPASE A2 FAMILY MEMBER"/>
    <property type="match status" value="1"/>
</dbReference>
<dbReference type="Pfam" id="PF00068">
    <property type="entry name" value="Phospholip_A2_1"/>
    <property type="match status" value="1"/>
</dbReference>
<dbReference type="PRINTS" id="PR00389">
    <property type="entry name" value="PHPHLIPASEA2"/>
</dbReference>
<dbReference type="SMART" id="SM00085">
    <property type="entry name" value="PA2c"/>
    <property type="match status" value="1"/>
</dbReference>
<dbReference type="SUPFAM" id="SSF48619">
    <property type="entry name" value="Phospholipase A2, PLA2"/>
    <property type="match status" value="1"/>
</dbReference>
<dbReference type="PROSITE" id="PS00119">
    <property type="entry name" value="PA2_ASP"/>
    <property type="match status" value="1"/>
</dbReference>
<dbReference type="PROSITE" id="PS00118">
    <property type="entry name" value="PA2_HIS"/>
    <property type="match status" value="1"/>
</dbReference>
<reference key="1">
    <citation type="journal article" date="2005" name="Cell. Mol. Life Sci.">
        <title>Identification and analysis of venom gland-specific genes from the coastal taipan (Oxyuranus scutellatus) and related species.</title>
        <authorList>
            <person name="St Pierre L."/>
            <person name="Woods R."/>
            <person name="Earl S.T.H."/>
            <person name="Masci P.P."/>
            <person name="Lavin M.F."/>
        </authorList>
    </citation>
    <scope>NUCLEOTIDE SEQUENCE [MRNA]</scope>
    <source>
        <tissue>Venom gland</tissue>
    </source>
</reference>
<reference key="2">
    <citation type="journal article" date="2005" name="FEBS J.">
        <title>Structure and function comparison of Micropechis ikaheka snake venom phospholipase A2 isoenzymes.</title>
        <authorList>
            <person name="Lok S.M."/>
            <person name="Gao R."/>
            <person name="Rouault M."/>
            <person name="Lambeau G."/>
            <person name="Gopalakrishnakone P."/>
            <person name="Swaminathan K."/>
        </authorList>
    </citation>
    <scope>X-RAY CRYSTALLOGRAPHY (2.3 ANGSTROMS) OF 52-139</scope>
    <scope>DISULFIDE BONDS</scope>
</reference>
<feature type="signal peptide" evidence="2">
    <location>
        <begin position="1"/>
        <end position="27"/>
    </location>
</feature>
<feature type="chain" id="PRO_0000043277" description="Acidic phospholipase A2 2">
    <location>
        <begin position="28"/>
        <end position="151"/>
    </location>
</feature>
<feature type="active site" evidence="1">
    <location>
        <position position="75"/>
    </location>
</feature>
<feature type="active site" evidence="1">
    <location>
        <position position="126"/>
    </location>
</feature>
<feature type="binding site" evidence="1">
    <location>
        <position position="55"/>
    </location>
    <ligand>
        <name>Ca(2+)</name>
        <dbReference type="ChEBI" id="CHEBI:29108"/>
    </ligand>
</feature>
<feature type="binding site" evidence="1">
    <location>
        <position position="57"/>
    </location>
    <ligand>
        <name>Ca(2+)</name>
        <dbReference type="ChEBI" id="CHEBI:29108"/>
    </ligand>
</feature>
<feature type="binding site" evidence="1">
    <location>
        <position position="59"/>
    </location>
    <ligand>
        <name>Ca(2+)</name>
        <dbReference type="ChEBI" id="CHEBI:29108"/>
    </ligand>
</feature>
<feature type="binding site" evidence="1">
    <location>
        <position position="76"/>
    </location>
    <ligand>
        <name>Ca(2+)</name>
        <dbReference type="ChEBI" id="CHEBI:29108"/>
    </ligand>
</feature>
<feature type="disulfide bond" evidence="5">
    <location>
        <begin position="38"/>
        <end position="104"/>
    </location>
</feature>
<feature type="disulfide bond" evidence="5">
    <location>
        <begin position="54"/>
        <end position="151"/>
    </location>
</feature>
<feature type="disulfide bond" evidence="5">
    <location>
        <begin position="56"/>
        <end position="72"/>
    </location>
</feature>
<feature type="disulfide bond" evidence="5">
    <location>
        <begin position="71"/>
        <end position="132"/>
    </location>
</feature>
<feature type="disulfide bond" evidence="5">
    <location>
        <begin position="78"/>
        <end position="125"/>
    </location>
</feature>
<feature type="disulfide bond" evidence="5">
    <location>
        <begin position="88"/>
        <end position="118"/>
    </location>
</feature>
<feature type="disulfide bond" evidence="5">
    <location>
        <begin position="111"/>
        <end position="123"/>
    </location>
</feature>
<feature type="helix" evidence="7">
    <location>
        <begin position="29"/>
        <end position="39"/>
    </location>
</feature>
<feature type="helix" evidence="7">
    <location>
        <begin position="45"/>
        <end position="48"/>
    </location>
</feature>
<feature type="turn" evidence="7">
    <location>
        <begin position="49"/>
        <end position="51"/>
    </location>
</feature>
<feature type="turn" evidence="7">
    <location>
        <begin position="53"/>
        <end position="55"/>
    </location>
</feature>
<feature type="strand" evidence="7">
    <location>
        <begin position="56"/>
        <end position="58"/>
    </location>
</feature>
<feature type="helix" evidence="7">
    <location>
        <begin position="67"/>
        <end position="82"/>
    </location>
</feature>
<feature type="turn" evidence="7">
    <location>
        <begin position="95"/>
        <end position="97"/>
    </location>
</feature>
<feature type="strand" evidence="7">
    <location>
        <begin position="102"/>
        <end position="105"/>
    </location>
</feature>
<feature type="strand" evidence="7">
    <location>
        <begin position="108"/>
        <end position="111"/>
    </location>
</feature>
<feature type="helix" evidence="7">
    <location>
        <begin position="117"/>
        <end position="134"/>
    </location>
</feature>
<name>PA2A2_TROCA</name>
<sequence length="151" mass="16891">MYPAHLLVLLAVCVSLLGAASIPARPLNLYQFGNMIQCANHGRRPTRHYMDYGCYCGKGGSGTPVDELDRCCQTHDDCYGEAEKLPACNYMMSGPYYNTYSYECNDGELTCKDNNDECKAFICNCDRTAAICFARAPYNDANWNIDTKTRC</sequence>
<evidence type="ECO:0000250" key="1"/>
<evidence type="ECO:0000255" key="2"/>
<evidence type="ECO:0000255" key="3">
    <source>
        <dbReference type="PROSITE-ProRule" id="PRU10035"/>
    </source>
</evidence>
<evidence type="ECO:0000255" key="4">
    <source>
        <dbReference type="PROSITE-ProRule" id="PRU10036"/>
    </source>
</evidence>
<evidence type="ECO:0000269" key="5">
    <source>
    </source>
</evidence>
<evidence type="ECO:0000305" key="6"/>
<evidence type="ECO:0007829" key="7">
    <source>
        <dbReference type="PDB" id="1P7O"/>
    </source>
</evidence>
<comment type="function">
    <text>PLA2 catalyzes the calcium-dependent hydrolysis of the 2-acyl groups in 3-sn-phosphoglycerides.</text>
</comment>
<comment type="catalytic activity">
    <reaction evidence="3 4">
        <text>a 1,2-diacyl-sn-glycero-3-phosphocholine + H2O = a 1-acyl-sn-glycero-3-phosphocholine + a fatty acid + H(+)</text>
        <dbReference type="Rhea" id="RHEA:15801"/>
        <dbReference type="ChEBI" id="CHEBI:15377"/>
        <dbReference type="ChEBI" id="CHEBI:15378"/>
        <dbReference type="ChEBI" id="CHEBI:28868"/>
        <dbReference type="ChEBI" id="CHEBI:57643"/>
        <dbReference type="ChEBI" id="CHEBI:58168"/>
        <dbReference type="EC" id="3.1.1.4"/>
    </reaction>
</comment>
<comment type="cofactor">
    <cofactor evidence="1">
        <name>Ca(2+)</name>
        <dbReference type="ChEBI" id="CHEBI:29108"/>
    </cofactor>
    <text evidence="1">Binds 1 Ca(2+) ion.</text>
</comment>
<comment type="subcellular location">
    <subcellularLocation>
        <location>Secreted</location>
    </subcellularLocation>
</comment>
<comment type="tissue specificity">
    <text>Expressed by the venom gland.</text>
</comment>
<comment type="similarity">
    <text evidence="6">Belongs to the phospholipase A2 family. Group I subfamily. D49 sub-subfamily.</text>
</comment>
<proteinExistence type="evidence at protein level"/>
<protein>
    <recommendedName>
        <fullName>Acidic phospholipase A2 2</fullName>
        <shortName>svPLA2</shortName>
        <ecNumber>3.1.1.4</ecNumber>
    </recommendedName>
    <alternativeName>
        <fullName>Phosphatidylcholine 2-acylhydrolase 2</fullName>
        <shortName>PLA-2</shortName>
    </alternativeName>
</protein>
<organism>
    <name type="scientific">Tropidechis carinatus</name>
    <name type="common">Australian rough-scaled snake</name>
    <dbReference type="NCBI Taxonomy" id="100989"/>
    <lineage>
        <taxon>Eukaryota</taxon>
        <taxon>Metazoa</taxon>
        <taxon>Chordata</taxon>
        <taxon>Craniata</taxon>
        <taxon>Vertebrata</taxon>
        <taxon>Euteleostomi</taxon>
        <taxon>Lepidosauria</taxon>
        <taxon>Squamata</taxon>
        <taxon>Bifurcata</taxon>
        <taxon>Unidentata</taxon>
        <taxon>Episquamata</taxon>
        <taxon>Toxicofera</taxon>
        <taxon>Serpentes</taxon>
        <taxon>Colubroidea</taxon>
        <taxon>Elapidae</taxon>
        <taxon>Notechinae</taxon>
        <taxon>Tropidechis</taxon>
    </lineage>
</organism>
<keyword id="KW-0002">3D-structure</keyword>
<keyword id="KW-0106">Calcium</keyword>
<keyword id="KW-1015">Disulfide bond</keyword>
<keyword id="KW-0378">Hydrolase</keyword>
<keyword id="KW-0442">Lipid degradation</keyword>
<keyword id="KW-0443">Lipid metabolism</keyword>
<keyword id="KW-0479">Metal-binding</keyword>
<keyword id="KW-0964">Secreted</keyword>
<keyword id="KW-0732">Signal</keyword>
<keyword id="KW-0800">Toxin</keyword>
<accession>Q45Z29</accession>